<comment type="subcellular location">
    <subcellularLocation>
        <location>Mitochondrion</location>
    </subcellularLocation>
</comment>
<comment type="similarity">
    <text evidence="1">Belongs to the bacterial ribosomal protein bL32 family.</text>
</comment>
<geneLocation type="mitochondrion"/>
<dbReference type="EMBL" id="AF007261">
    <property type="protein sequence ID" value="AAD11908.1"/>
    <property type="molecule type" value="Genomic_DNA"/>
</dbReference>
<dbReference type="PIR" id="S78175">
    <property type="entry name" value="S78175"/>
</dbReference>
<dbReference type="RefSeq" id="NP_044793.1">
    <property type="nucleotide sequence ID" value="NC_001823.1"/>
</dbReference>
<dbReference type="SMR" id="O21281"/>
<dbReference type="GeneID" id="801101"/>
<dbReference type="GO" id="GO:0015934">
    <property type="term" value="C:large ribosomal subunit"/>
    <property type="evidence" value="ECO:0007669"/>
    <property type="project" value="InterPro"/>
</dbReference>
<dbReference type="GO" id="GO:0005739">
    <property type="term" value="C:mitochondrion"/>
    <property type="evidence" value="ECO:0007669"/>
    <property type="project" value="UniProtKB-SubCell"/>
</dbReference>
<dbReference type="GO" id="GO:0003735">
    <property type="term" value="F:structural constituent of ribosome"/>
    <property type="evidence" value="ECO:0007669"/>
    <property type="project" value="InterPro"/>
</dbReference>
<dbReference type="GO" id="GO:0006412">
    <property type="term" value="P:translation"/>
    <property type="evidence" value="ECO:0007669"/>
    <property type="project" value="InterPro"/>
</dbReference>
<dbReference type="HAMAP" id="MF_00340">
    <property type="entry name" value="Ribosomal_bL32"/>
    <property type="match status" value="1"/>
</dbReference>
<dbReference type="InterPro" id="IPR002677">
    <property type="entry name" value="Ribosomal_bL32"/>
</dbReference>
<dbReference type="InterPro" id="IPR044957">
    <property type="entry name" value="Ribosomal_bL32_bact"/>
</dbReference>
<dbReference type="InterPro" id="IPR011332">
    <property type="entry name" value="Ribosomal_zn-bd"/>
</dbReference>
<dbReference type="NCBIfam" id="TIGR01031">
    <property type="entry name" value="rpmF_bact"/>
    <property type="match status" value="1"/>
</dbReference>
<dbReference type="PANTHER" id="PTHR35534">
    <property type="entry name" value="50S RIBOSOMAL PROTEIN L32"/>
    <property type="match status" value="1"/>
</dbReference>
<dbReference type="PANTHER" id="PTHR35534:SF1">
    <property type="entry name" value="LARGE RIBOSOMAL SUBUNIT PROTEIN BL32"/>
    <property type="match status" value="1"/>
</dbReference>
<dbReference type="Pfam" id="PF01783">
    <property type="entry name" value="Ribosomal_L32p"/>
    <property type="match status" value="1"/>
</dbReference>
<dbReference type="SUPFAM" id="SSF57829">
    <property type="entry name" value="Zn-binding ribosomal proteins"/>
    <property type="match status" value="1"/>
</dbReference>
<accession>O21281</accession>
<keyword id="KW-0496">Mitochondrion</keyword>
<keyword id="KW-0687">Ribonucleoprotein</keyword>
<keyword id="KW-0689">Ribosomal protein</keyword>
<feature type="chain" id="PRO_0000172484" description="Large ribosomal subunit protein bL32m">
    <location>
        <begin position="1"/>
        <end position="62"/>
    </location>
</feature>
<reference key="1">
    <citation type="journal article" date="1997" name="Nature">
        <title>An ancestral mitochondrial DNA resembling a eubacterial genome in miniature.</title>
        <authorList>
            <person name="Lang B.F."/>
            <person name="Burger G."/>
            <person name="O'Kelly C.J."/>
            <person name="Cedergren R."/>
            <person name="Golding G.B."/>
            <person name="Lemieux C."/>
            <person name="Sankoff D."/>
            <person name="Turmel M."/>
            <person name="Gray M.W."/>
        </authorList>
    </citation>
    <scope>NUCLEOTIDE SEQUENCE [GENOMIC DNA]</scope>
    <source>
        <strain>ATCC 50394</strain>
    </source>
</reference>
<protein>
    <recommendedName>
        <fullName evidence="1">Large ribosomal subunit protein bL32m</fullName>
    </recommendedName>
    <alternativeName>
        <fullName>60S ribosomal protein L32, mitochondrial</fullName>
    </alternativeName>
</protein>
<evidence type="ECO:0000305" key="1"/>
<organism>
    <name type="scientific">Reclinomonas americana</name>
    <dbReference type="NCBI Taxonomy" id="48483"/>
    <lineage>
        <taxon>Eukaryota</taxon>
        <taxon>Discoba</taxon>
        <taxon>Jakobida</taxon>
        <taxon>Histionina</taxon>
        <taxon>Histionidae</taxon>
        <taxon>Reclinomonas</taxon>
    </lineage>
</organism>
<sequence length="62" mass="7431">MAVPKRKPSVSRRKIRNVFIRAEMKKNLSNYSICKHCNYVKKKHHICNNCGYYKESLIYKIV</sequence>
<proteinExistence type="inferred from homology"/>
<gene>
    <name type="primary">RPL32</name>
</gene>
<name>RM32_RECAM</name>